<evidence type="ECO:0000255" key="1">
    <source>
        <dbReference type="HAMAP-Rule" id="MF_01110"/>
    </source>
</evidence>
<dbReference type="EC" id="1.2.1.38" evidence="1"/>
<dbReference type="EMBL" id="AM236080">
    <property type="protein sequence ID" value="CAK07163.1"/>
    <property type="molecule type" value="Genomic_DNA"/>
</dbReference>
<dbReference type="RefSeq" id="WP_011651343.1">
    <property type="nucleotide sequence ID" value="NC_008380.1"/>
</dbReference>
<dbReference type="SMR" id="Q1MIP7"/>
<dbReference type="EnsemblBacteria" id="CAK07163">
    <property type="protein sequence ID" value="CAK07163"/>
    <property type="gene ID" value="RL1668"/>
</dbReference>
<dbReference type="KEGG" id="rle:RL1668"/>
<dbReference type="eggNOG" id="COG0002">
    <property type="taxonomic scope" value="Bacteria"/>
</dbReference>
<dbReference type="HOGENOM" id="CLU_077118_0_0_5"/>
<dbReference type="UniPathway" id="UPA00068">
    <property type="reaction ID" value="UER00108"/>
</dbReference>
<dbReference type="Proteomes" id="UP000006575">
    <property type="component" value="Chromosome"/>
</dbReference>
<dbReference type="GO" id="GO:0005737">
    <property type="term" value="C:cytoplasm"/>
    <property type="evidence" value="ECO:0007669"/>
    <property type="project" value="UniProtKB-SubCell"/>
</dbReference>
<dbReference type="GO" id="GO:0003942">
    <property type="term" value="F:N-acetyl-gamma-glutamyl-phosphate reductase activity"/>
    <property type="evidence" value="ECO:0007669"/>
    <property type="project" value="UniProtKB-UniRule"/>
</dbReference>
<dbReference type="GO" id="GO:0051287">
    <property type="term" value="F:NAD binding"/>
    <property type="evidence" value="ECO:0007669"/>
    <property type="project" value="InterPro"/>
</dbReference>
<dbReference type="GO" id="GO:0006526">
    <property type="term" value="P:L-arginine biosynthetic process"/>
    <property type="evidence" value="ECO:0007669"/>
    <property type="project" value="UniProtKB-UniRule"/>
</dbReference>
<dbReference type="CDD" id="cd23935">
    <property type="entry name" value="AGPR_2_C"/>
    <property type="match status" value="1"/>
</dbReference>
<dbReference type="CDD" id="cd17896">
    <property type="entry name" value="AGPR_2_N"/>
    <property type="match status" value="1"/>
</dbReference>
<dbReference type="Gene3D" id="3.30.360.10">
    <property type="entry name" value="Dihydrodipicolinate Reductase, domain 2"/>
    <property type="match status" value="1"/>
</dbReference>
<dbReference type="Gene3D" id="3.40.50.720">
    <property type="entry name" value="NAD(P)-binding Rossmann-like Domain"/>
    <property type="match status" value="1"/>
</dbReference>
<dbReference type="HAMAP" id="MF_01110">
    <property type="entry name" value="ArgC_type2"/>
    <property type="match status" value="1"/>
</dbReference>
<dbReference type="InterPro" id="IPR023013">
    <property type="entry name" value="AGPR_AS"/>
</dbReference>
<dbReference type="InterPro" id="IPR010136">
    <property type="entry name" value="AGPR_type-2"/>
</dbReference>
<dbReference type="InterPro" id="IPR036291">
    <property type="entry name" value="NAD(P)-bd_dom_sf"/>
</dbReference>
<dbReference type="InterPro" id="IPR050085">
    <property type="entry name" value="NAGSA_dehydrogenase"/>
</dbReference>
<dbReference type="InterPro" id="IPR000534">
    <property type="entry name" value="Semialdehyde_DH_NAD-bd"/>
</dbReference>
<dbReference type="NCBIfam" id="TIGR01851">
    <property type="entry name" value="argC_other"/>
    <property type="match status" value="1"/>
</dbReference>
<dbReference type="PANTHER" id="PTHR32338:SF10">
    <property type="entry name" value="N-ACETYL-GAMMA-GLUTAMYL-PHOSPHATE REDUCTASE, CHLOROPLASTIC-RELATED"/>
    <property type="match status" value="1"/>
</dbReference>
<dbReference type="PANTHER" id="PTHR32338">
    <property type="entry name" value="N-ACETYL-GAMMA-GLUTAMYL-PHOSPHATE REDUCTASE, CHLOROPLASTIC-RELATED-RELATED"/>
    <property type="match status" value="1"/>
</dbReference>
<dbReference type="Pfam" id="PF01118">
    <property type="entry name" value="Semialdhyde_dh"/>
    <property type="match status" value="1"/>
</dbReference>
<dbReference type="Pfam" id="PF22698">
    <property type="entry name" value="Semialdhyde_dhC_1"/>
    <property type="match status" value="1"/>
</dbReference>
<dbReference type="SMART" id="SM00859">
    <property type="entry name" value="Semialdhyde_dh"/>
    <property type="match status" value="1"/>
</dbReference>
<dbReference type="SUPFAM" id="SSF55347">
    <property type="entry name" value="Glyceraldehyde-3-phosphate dehydrogenase-like, C-terminal domain"/>
    <property type="match status" value="1"/>
</dbReference>
<dbReference type="SUPFAM" id="SSF51735">
    <property type="entry name" value="NAD(P)-binding Rossmann-fold domains"/>
    <property type="match status" value="1"/>
</dbReference>
<dbReference type="PROSITE" id="PS01224">
    <property type="entry name" value="ARGC"/>
    <property type="match status" value="1"/>
</dbReference>
<reference key="1">
    <citation type="journal article" date="2006" name="Genome Biol.">
        <title>The genome of Rhizobium leguminosarum has recognizable core and accessory components.</title>
        <authorList>
            <person name="Young J.P.W."/>
            <person name="Crossman L.C."/>
            <person name="Johnston A.W.B."/>
            <person name="Thomson N.R."/>
            <person name="Ghazoui Z.F."/>
            <person name="Hull K.H."/>
            <person name="Wexler M."/>
            <person name="Curson A.R.J."/>
            <person name="Todd J.D."/>
            <person name="Poole P.S."/>
            <person name="Mauchline T.H."/>
            <person name="East A.K."/>
            <person name="Quail M.A."/>
            <person name="Churcher C."/>
            <person name="Arrowsmith C."/>
            <person name="Cherevach I."/>
            <person name="Chillingworth T."/>
            <person name="Clarke K."/>
            <person name="Cronin A."/>
            <person name="Davis P."/>
            <person name="Fraser A."/>
            <person name="Hance Z."/>
            <person name="Hauser H."/>
            <person name="Jagels K."/>
            <person name="Moule S."/>
            <person name="Mungall K."/>
            <person name="Norbertczak H."/>
            <person name="Rabbinowitsch E."/>
            <person name="Sanders M."/>
            <person name="Simmonds M."/>
            <person name="Whitehead S."/>
            <person name="Parkhill J."/>
        </authorList>
    </citation>
    <scope>NUCLEOTIDE SEQUENCE [LARGE SCALE GENOMIC DNA]</scope>
    <source>
        <strain>DSM 114642 / LMG 32736 / 3841</strain>
    </source>
</reference>
<feature type="chain" id="PRO_1000065145" description="N-acetyl-gamma-glutamyl-phosphate reductase">
    <location>
        <begin position="1"/>
        <end position="310"/>
    </location>
</feature>
<feature type="active site" evidence="1">
    <location>
        <position position="117"/>
    </location>
</feature>
<organism>
    <name type="scientific">Rhizobium johnstonii (strain DSM 114642 / LMG 32736 / 3841)</name>
    <name type="common">Rhizobium leguminosarum bv. viciae</name>
    <dbReference type="NCBI Taxonomy" id="216596"/>
    <lineage>
        <taxon>Bacteria</taxon>
        <taxon>Pseudomonadati</taxon>
        <taxon>Pseudomonadota</taxon>
        <taxon>Alphaproteobacteria</taxon>
        <taxon>Hyphomicrobiales</taxon>
        <taxon>Rhizobiaceae</taxon>
        <taxon>Rhizobium/Agrobacterium group</taxon>
        <taxon>Rhizobium</taxon>
        <taxon>Rhizobium johnstonii</taxon>
    </lineage>
</organism>
<proteinExistence type="inferred from homology"/>
<sequence>MAPKIFIDGEHGTTGLQIRTRMAGRRDVELLSIPEAERRNAAMREDMLNGADIAILCLPDDASKEAVQMVSANNNVRVIDTSTAFRVNPGWAYGFAEMDKQQADKIAAARFVANPGCYPTGAIGLIRPLRAAGILPDGYPITVNAVSGYTGGGKQMIAQMENPDHPDAITAPHFLYGLPLTHKHVPEMTVHGLLDRAPIFSPSVGKFAQGMIVQVPLHLDDLAEGTTMESIHAALVAHYAGQDIVSVVPLAESKALPRVNAIELEGKDTMKLFVFGTPGASQVNLVALLDNLGKGASGAAVQNMDLMLAS</sequence>
<name>ARGC_RHIJ3</name>
<accession>Q1MIP7</accession>
<protein>
    <recommendedName>
        <fullName evidence="1">N-acetyl-gamma-glutamyl-phosphate reductase</fullName>
        <shortName evidence="1">AGPR</shortName>
        <ecNumber evidence="1">1.2.1.38</ecNumber>
    </recommendedName>
    <alternativeName>
        <fullName evidence="1">N-acetyl-glutamate semialdehyde dehydrogenase</fullName>
        <shortName evidence="1">NAGSA dehydrogenase</shortName>
    </alternativeName>
</protein>
<keyword id="KW-0028">Amino-acid biosynthesis</keyword>
<keyword id="KW-0055">Arginine biosynthesis</keyword>
<keyword id="KW-0963">Cytoplasm</keyword>
<keyword id="KW-0521">NADP</keyword>
<keyword id="KW-0560">Oxidoreductase</keyword>
<comment type="function">
    <text evidence="1">Catalyzes the NADPH-dependent reduction of N-acetyl-5-glutamyl phosphate to yield N-acetyl-L-glutamate 5-semialdehyde.</text>
</comment>
<comment type="catalytic activity">
    <reaction evidence="1">
        <text>N-acetyl-L-glutamate 5-semialdehyde + phosphate + NADP(+) = N-acetyl-L-glutamyl 5-phosphate + NADPH + H(+)</text>
        <dbReference type="Rhea" id="RHEA:21588"/>
        <dbReference type="ChEBI" id="CHEBI:15378"/>
        <dbReference type="ChEBI" id="CHEBI:29123"/>
        <dbReference type="ChEBI" id="CHEBI:43474"/>
        <dbReference type="ChEBI" id="CHEBI:57783"/>
        <dbReference type="ChEBI" id="CHEBI:57936"/>
        <dbReference type="ChEBI" id="CHEBI:58349"/>
        <dbReference type="EC" id="1.2.1.38"/>
    </reaction>
</comment>
<comment type="pathway">
    <text evidence="1">Amino-acid biosynthesis; L-arginine biosynthesis; N(2)-acetyl-L-ornithine from L-glutamate: step 3/4.</text>
</comment>
<comment type="subcellular location">
    <subcellularLocation>
        <location evidence="1">Cytoplasm</location>
    </subcellularLocation>
</comment>
<comment type="similarity">
    <text evidence="1">Belongs to the NAGSA dehydrogenase family. Type 2 subfamily.</text>
</comment>
<gene>
    <name evidence="1" type="primary">argC</name>
    <name type="ordered locus">RL1668</name>
</gene>